<name>HSCA_JANMA</name>
<dbReference type="EMBL" id="CP000269">
    <property type="protein sequence ID" value="ABR89750.1"/>
    <property type="molecule type" value="Genomic_DNA"/>
</dbReference>
<dbReference type="RefSeq" id="WP_012079113.1">
    <property type="nucleotide sequence ID" value="NC_009659.1"/>
</dbReference>
<dbReference type="SMR" id="A6SXE9"/>
<dbReference type="STRING" id="375286.mma_1256"/>
<dbReference type="KEGG" id="mms:mma_1256"/>
<dbReference type="eggNOG" id="COG0443">
    <property type="taxonomic scope" value="Bacteria"/>
</dbReference>
<dbReference type="HOGENOM" id="CLU_005965_2_4_4"/>
<dbReference type="OrthoDB" id="9766019at2"/>
<dbReference type="Proteomes" id="UP000006388">
    <property type="component" value="Chromosome"/>
</dbReference>
<dbReference type="GO" id="GO:0005524">
    <property type="term" value="F:ATP binding"/>
    <property type="evidence" value="ECO:0007669"/>
    <property type="project" value="UniProtKB-KW"/>
</dbReference>
<dbReference type="GO" id="GO:0016887">
    <property type="term" value="F:ATP hydrolysis activity"/>
    <property type="evidence" value="ECO:0007669"/>
    <property type="project" value="UniProtKB-UniRule"/>
</dbReference>
<dbReference type="GO" id="GO:0140662">
    <property type="term" value="F:ATP-dependent protein folding chaperone"/>
    <property type="evidence" value="ECO:0007669"/>
    <property type="project" value="InterPro"/>
</dbReference>
<dbReference type="GO" id="GO:0051082">
    <property type="term" value="F:unfolded protein binding"/>
    <property type="evidence" value="ECO:0007669"/>
    <property type="project" value="InterPro"/>
</dbReference>
<dbReference type="GO" id="GO:0016226">
    <property type="term" value="P:iron-sulfur cluster assembly"/>
    <property type="evidence" value="ECO:0007669"/>
    <property type="project" value="InterPro"/>
</dbReference>
<dbReference type="FunFam" id="3.30.420.40:FF:000046">
    <property type="entry name" value="Chaperone protein HscA"/>
    <property type="match status" value="1"/>
</dbReference>
<dbReference type="FunFam" id="2.60.34.10:FF:000005">
    <property type="entry name" value="Chaperone protein HscA homolog"/>
    <property type="match status" value="1"/>
</dbReference>
<dbReference type="Gene3D" id="1.20.1270.10">
    <property type="match status" value="1"/>
</dbReference>
<dbReference type="Gene3D" id="3.30.420.40">
    <property type="match status" value="2"/>
</dbReference>
<dbReference type="Gene3D" id="3.90.640.10">
    <property type="entry name" value="Actin, Chain A, domain 4"/>
    <property type="match status" value="1"/>
</dbReference>
<dbReference type="Gene3D" id="2.60.34.10">
    <property type="entry name" value="Substrate Binding Domain Of DNAk, Chain A, domain 1"/>
    <property type="match status" value="1"/>
</dbReference>
<dbReference type="HAMAP" id="MF_00679">
    <property type="entry name" value="HscA"/>
    <property type="match status" value="1"/>
</dbReference>
<dbReference type="InterPro" id="IPR043129">
    <property type="entry name" value="ATPase_NBD"/>
</dbReference>
<dbReference type="InterPro" id="IPR018181">
    <property type="entry name" value="Heat_shock_70_CS"/>
</dbReference>
<dbReference type="InterPro" id="IPR029048">
    <property type="entry name" value="HSP70_C_sf"/>
</dbReference>
<dbReference type="InterPro" id="IPR029047">
    <property type="entry name" value="HSP70_peptide-bd_sf"/>
</dbReference>
<dbReference type="InterPro" id="IPR013126">
    <property type="entry name" value="Hsp_70_fam"/>
</dbReference>
<dbReference type="InterPro" id="IPR010236">
    <property type="entry name" value="ISC_FeS_clus_asmbl_HscA"/>
</dbReference>
<dbReference type="NCBIfam" id="TIGR01991">
    <property type="entry name" value="HscA"/>
    <property type="match status" value="1"/>
</dbReference>
<dbReference type="NCBIfam" id="NF003520">
    <property type="entry name" value="PRK05183.1"/>
    <property type="match status" value="1"/>
</dbReference>
<dbReference type="PANTHER" id="PTHR19375">
    <property type="entry name" value="HEAT SHOCK PROTEIN 70KDA"/>
    <property type="match status" value="1"/>
</dbReference>
<dbReference type="Pfam" id="PF00012">
    <property type="entry name" value="HSP70"/>
    <property type="match status" value="1"/>
</dbReference>
<dbReference type="PRINTS" id="PR00301">
    <property type="entry name" value="HEATSHOCK70"/>
</dbReference>
<dbReference type="SUPFAM" id="SSF53067">
    <property type="entry name" value="Actin-like ATPase domain"/>
    <property type="match status" value="2"/>
</dbReference>
<dbReference type="SUPFAM" id="SSF100934">
    <property type="entry name" value="Heat shock protein 70kD (HSP70), C-terminal subdomain"/>
    <property type="match status" value="1"/>
</dbReference>
<dbReference type="SUPFAM" id="SSF100920">
    <property type="entry name" value="Heat shock protein 70kD (HSP70), peptide-binding domain"/>
    <property type="match status" value="1"/>
</dbReference>
<dbReference type="PROSITE" id="PS00297">
    <property type="entry name" value="HSP70_1"/>
    <property type="match status" value="1"/>
</dbReference>
<dbReference type="PROSITE" id="PS00329">
    <property type="entry name" value="HSP70_2"/>
    <property type="match status" value="1"/>
</dbReference>
<dbReference type="PROSITE" id="PS01036">
    <property type="entry name" value="HSP70_3"/>
    <property type="match status" value="1"/>
</dbReference>
<accession>A6SXE9</accession>
<gene>
    <name evidence="1" type="primary">hscA</name>
    <name type="ordered locus">mma_1256</name>
</gene>
<keyword id="KW-0067">ATP-binding</keyword>
<keyword id="KW-0143">Chaperone</keyword>
<keyword id="KW-0547">Nucleotide-binding</keyword>
<organism>
    <name type="scientific">Janthinobacterium sp. (strain Marseille)</name>
    <name type="common">Minibacterium massiliensis</name>
    <dbReference type="NCBI Taxonomy" id="375286"/>
    <lineage>
        <taxon>Bacteria</taxon>
        <taxon>Pseudomonadati</taxon>
        <taxon>Pseudomonadota</taxon>
        <taxon>Betaproteobacteria</taxon>
        <taxon>Burkholderiales</taxon>
        <taxon>Oxalobacteraceae</taxon>
        <taxon>Janthinobacterium</taxon>
    </lineage>
</organism>
<comment type="function">
    <text evidence="1">Chaperone involved in the maturation of iron-sulfur cluster-containing proteins. Has a low intrinsic ATPase activity which is markedly stimulated by HscB.</text>
</comment>
<comment type="similarity">
    <text evidence="1">Belongs to the heat shock protein 70 family.</text>
</comment>
<proteinExistence type="inferred from homology"/>
<sequence>MALLQIAEPGMSTAPHQHRLAVGIDLGTTNSLVATVRNSIPEVLTDEEGRALLPSVVHYMKNGHAQIGYKALAAQNTDPKNTIASVKRFMGRGLKDIAYVENLPYDFLDTPGMVQLKTVAGVKSPVEISAEILATLRQQAEDALGDELVGAVITVPAYFDDAQRQATKDAAKLAGLNVLRLLNEPTAAAIAYGLDNGSEGVFAVYDLGGGTFDVSILKLTKGVFEVLSTGGDSALGGDDFDHRLLCWIIEQAKLSPLSDEDLSVLMVKSREAKELLSTKAETHIDAALGSGEEVHLTVTAADFVKMTQHLVAKTITPTKKALRDADLTVDDVDGVVMVGGATRMPHIRKAVGEFFQATPLANIDPDKVVALGAAVQANLLAGNRAAGDDWLLLDVIPLSLGIETMGGLVEKVIPRNSTIPCARAQEFTTFKDGQTAMAIHIVQGERELVSDCRSLARFELRGIPPMAAGAARIRVTYQVDADGLLSVSARELRSGVEASISVKPSYGLADDQIAQMLQDSFKSADVDMALRALREEQVEAERIVLATQSALDADGALLTDDERNAVTSLLAAVQQSSKGDDHHAIKAAVEALAQGTEEFAARRMDRSVRTALSGKKLDEI</sequence>
<evidence type="ECO:0000255" key="1">
    <source>
        <dbReference type="HAMAP-Rule" id="MF_00679"/>
    </source>
</evidence>
<reference key="1">
    <citation type="journal article" date="2007" name="PLoS Genet.">
        <title>Genome analysis of Minibacterium massiliensis highlights the convergent evolution of water-living bacteria.</title>
        <authorList>
            <person name="Audic S."/>
            <person name="Robert C."/>
            <person name="Campagna B."/>
            <person name="Parinello H."/>
            <person name="Claverie J.-M."/>
            <person name="Raoult D."/>
            <person name="Drancourt M."/>
        </authorList>
    </citation>
    <scope>NUCLEOTIDE SEQUENCE [LARGE SCALE GENOMIC DNA]</scope>
    <source>
        <strain>Marseille</strain>
    </source>
</reference>
<protein>
    <recommendedName>
        <fullName evidence="1">Chaperone protein HscA homolog</fullName>
    </recommendedName>
</protein>
<feature type="chain" id="PRO_1000044863" description="Chaperone protein HscA homolog">
    <location>
        <begin position="1"/>
        <end position="620"/>
    </location>
</feature>